<reference key="1">
    <citation type="journal article" date="2007" name="Science">
        <title>Legumes symbioses: absence of nod genes in photosynthetic bradyrhizobia.</title>
        <authorList>
            <person name="Giraud E."/>
            <person name="Moulin L."/>
            <person name="Vallenet D."/>
            <person name="Barbe V."/>
            <person name="Cytryn E."/>
            <person name="Avarre J.-C."/>
            <person name="Jaubert M."/>
            <person name="Simon D."/>
            <person name="Cartieaux F."/>
            <person name="Prin Y."/>
            <person name="Bena G."/>
            <person name="Hannibal L."/>
            <person name="Fardoux J."/>
            <person name="Kojadinovic M."/>
            <person name="Vuillet L."/>
            <person name="Lajus A."/>
            <person name="Cruveiller S."/>
            <person name="Rouy Z."/>
            <person name="Mangenot S."/>
            <person name="Segurens B."/>
            <person name="Dossat C."/>
            <person name="Franck W.L."/>
            <person name="Chang W.-S."/>
            <person name="Saunders E."/>
            <person name="Bruce D."/>
            <person name="Richardson P."/>
            <person name="Normand P."/>
            <person name="Dreyfus B."/>
            <person name="Pignol D."/>
            <person name="Stacey G."/>
            <person name="Emerich D."/>
            <person name="Vermeglio A."/>
            <person name="Medigue C."/>
            <person name="Sadowsky M."/>
        </authorList>
    </citation>
    <scope>NUCLEOTIDE SEQUENCE [LARGE SCALE GENOMIC DNA]</scope>
    <source>
        <strain>ORS 278</strain>
    </source>
</reference>
<dbReference type="EC" id="2.7.7.56" evidence="1"/>
<dbReference type="EMBL" id="CU234118">
    <property type="protein sequence ID" value="CAL74139.1"/>
    <property type="molecule type" value="Genomic_DNA"/>
</dbReference>
<dbReference type="RefSeq" id="WP_011923431.1">
    <property type="nucleotide sequence ID" value="NC_009445.1"/>
</dbReference>
<dbReference type="SMR" id="A4YJR3"/>
<dbReference type="STRING" id="114615.BRADO0173"/>
<dbReference type="KEGG" id="bra:BRADO0173"/>
<dbReference type="eggNOG" id="COG0689">
    <property type="taxonomic scope" value="Bacteria"/>
</dbReference>
<dbReference type="HOGENOM" id="CLU_050858_0_0_5"/>
<dbReference type="OrthoDB" id="9802265at2"/>
<dbReference type="Proteomes" id="UP000001994">
    <property type="component" value="Chromosome"/>
</dbReference>
<dbReference type="GO" id="GO:0000175">
    <property type="term" value="F:3'-5'-RNA exonuclease activity"/>
    <property type="evidence" value="ECO:0007669"/>
    <property type="project" value="UniProtKB-UniRule"/>
</dbReference>
<dbReference type="GO" id="GO:0000049">
    <property type="term" value="F:tRNA binding"/>
    <property type="evidence" value="ECO:0007669"/>
    <property type="project" value="UniProtKB-UniRule"/>
</dbReference>
<dbReference type="GO" id="GO:0009022">
    <property type="term" value="F:tRNA nucleotidyltransferase activity"/>
    <property type="evidence" value="ECO:0007669"/>
    <property type="project" value="UniProtKB-UniRule"/>
</dbReference>
<dbReference type="GO" id="GO:0016075">
    <property type="term" value="P:rRNA catabolic process"/>
    <property type="evidence" value="ECO:0007669"/>
    <property type="project" value="UniProtKB-UniRule"/>
</dbReference>
<dbReference type="GO" id="GO:0006364">
    <property type="term" value="P:rRNA processing"/>
    <property type="evidence" value="ECO:0007669"/>
    <property type="project" value="UniProtKB-KW"/>
</dbReference>
<dbReference type="GO" id="GO:0008033">
    <property type="term" value="P:tRNA processing"/>
    <property type="evidence" value="ECO:0007669"/>
    <property type="project" value="UniProtKB-UniRule"/>
</dbReference>
<dbReference type="CDD" id="cd11362">
    <property type="entry name" value="RNase_PH_bact"/>
    <property type="match status" value="1"/>
</dbReference>
<dbReference type="FunFam" id="3.30.230.70:FF:000003">
    <property type="entry name" value="Ribonuclease PH"/>
    <property type="match status" value="1"/>
</dbReference>
<dbReference type="Gene3D" id="3.30.230.70">
    <property type="entry name" value="GHMP Kinase, N-terminal domain"/>
    <property type="match status" value="1"/>
</dbReference>
<dbReference type="HAMAP" id="MF_00564">
    <property type="entry name" value="RNase_PH"/>
    <property type="match status" value="1"/>
</dbReference>
<dbReference type="InterPro" id="IPR001247">
    <property type="entry name" value="ExoRNase_PH_dom1"/>
</dbReference>
<dbReference type="InterPro" id="IPR015847">
    <property type="entry name" value="ExoRNase_PH_dom2"/>
</dbReference>
<dbReference type="InterPro" id="IPR036345">
    <property type="entry name" value="ExoRNase_PH_dom2_sf"/>
</dbReference>
<dbReference type="InterPro" id="IPR027408">
    <property type="entry name" value="PNPase/RNase_PH_dom_sf"/>
</dbReference>
<dbReference type="InterPro" id="IPR020568">
    <property type="entry name" value="Ribosomal_Su5_D2-typ_SF"/>
</dbReference>
<dbReference type="InterPro" id="IPR050080">
    <property type="entry name" value="RNase_PH"/>
</dbReference>
<dbReference type="InterPro" id="IPR002381">
    <property type="entry name" value="RNase_PH_bac-type"/>
</dbReference>
<dbReference type="InterPro" id="IPR018336">
    <property type="entry name" value="RNase_PH_CS"/>
</dbReference>
<dbReference type="NCBIfam" id="TIGR01966">
    <property type="entry name" value="RNasePH"/>
    <property type="match status" value="1"/>
</dbReference>
<dbReference type="PANTHER" id="PTHR11953">
    <property type="entry name" value="EXOSOME COMPLEX COMPONENT"/>
    <property type="match status" value="1"/>
</dbReference>
<dbReference type="PANTHER" id="PTHR11953:SF0">
    <property type="entry name" value="EXOSOME COMPLEX COMPONENT RRP41"/>
    <property type="match status" value="1"/>
</dbReference>
<dbReference type="Pfam" id="PF01138">
    <property type="entry name" value="RNase_PH"/>
    <property type="match status" value="1"/>
</dbReference>
<dbReference type="Pfam" id="PF03725">
    <property type="entry name" value="RNase_PH_C"/>
    <property type="match status" value="1"/>
</dbReference>
<dbReference type="SUPFAM" id="SSF55666">
    <property type="entry name" value="Ribonuclease PH domain 2-like"/>
    <property type="match status" value="1"/>
</dbReference>
<dbReference type="SUPFAM" id="SSF54211">
    <property type="entry name" value="Ribosomal protein S5 domain 2-like"/>
    <property type="match status" value="1"/>
</dbReference>
<dbReference type="PROSITE" id="PS01277">
    <property type="entry name" value="RIBONUCLEASE_PH"/>
    <property type="match status" value="1"/>
</dbReference>
<sequence>MRPSRRAPDEMRAVSLERGVVKYAEGSCLVKFGDTHVLVTATLEDRLPPWLKGQGRGWITAEYGMLPRATLERTRREASAGKQTGRTVEIQRLIGRSLRTAIDLEALGERQITVDCDVLQADGGTRTASITGAWVALADCIRWMKARNMIKTEVLRTNVAAVSCGIYNGTPVLDLDYAEDSEAETDANFVMTGDGRIIEVQGTAEKTPFSEAEFLALMALARKGVGRLVDLQKMAVA</sequence>
<proteinExistence type="inferred from homology"/>
<protein>
    <recommendedName>
        <fullName evidence="1">Ribonuclease PH</fullName>
        <shortName evidence="1">RNase PH</shortName>
        <ecNumber evidence="1">2.7.7.56</ecNumber>
    </recommendedName>
    <alternativeName>
        <fullName evidence="1">tRNA nucleotidyltransferase</fullName>
    </alternativeName>
</protein>
<name>RNPH_BRASO</name>
<evidence type="ECO:0000255" key="1">
    <source>
        <dbReference type="HAMAP-Rule" id="MF_00564"/>
    </source>
</evidence>
<gene>
    <name evidence="1" type="primary">rph</name>
    <name type="ordered locus">BRADO0173</name>
</gene>
<organism>
    <name type="scientific">Bradyrhizobium sp. (strain ORS 278)</name>
    <dbReference type="NCBI Taxonomy" id="114615"/>
    <lineage>
        <taxon>Bacteria</taxon>
        <taxon>Pseudomonadati</taxon>
        <taxon>Pseudomonadota</taxon>
        <taxon>Alphaproteobacteria</taxon>
        <taxon>Hyphomicrobiales</taxon>
        <taxon>Nitrobacteraceae</taxon>
        <taxon>Bradyrhizobium</taxon>
    </lineage>
</organism>
<accession>A4YJR3</accession>
<comment type="function">
    <text evidence="1">Phosphorolytic 3'-5' exoribonuclease that plays an important role in tRNA 3'-end maturation. Removes nucleotide residues following the 3'-CCA terminus of tRNAs; can also add nucleotides to the ends of RNA molecules by using nucleoside diphosphates as substrates, but this may not be physiologically important. Probably plays a role in initiation of 16S rRNA degradation (leading to ribosome degradation) during starvation.</text>
</comment>
<comment type="catalytic activity">
    <reaction evidence="1">
        <text>tRNA(n+1) + phosphate = tRNA(n) + a ribonucleoside 5'-diphosphate</text>
        <dbReference type="Rhea" id="RHEA:10628"/>
        <dbReference type="Rhea" id="RHEA-COMP:17343"/>
        <dbReference type="Rhea" id="RHEA-COMP:17344"/>
        <dbReference type="ChEBI" id="CHEBI:43474"/>
        <dbReference type="ChEBI" id="CHEBI:57930"/>
        <dbReference type="ChEBI" id="CHEBI:173114"/>
        <dbReference type="EC" id="2.7.7.56"/>
    </reaction>
</comment>
<comment type="subunit">
    <text evidence="1">Homohexameric ring arranged as a trimer of dimers.</text>
</comment>
<comment type="similarity">
    <text evidence="1">Belongs to the RNase PH family.</text>
</comment>
<feature type="chain" id="PRO_1000024779" description="Ribonuclease PH">
    <location>
        <begin position="1"/>
        <end position="237"/>
    </location>
</feature>
<feature type="binding site" evidence="1">
    <location>
        <position position="86"/>
    </location>
    <ligand>
        <name>phosphate</name>
        <dbReference type="ChEBI" id="CHEBI:43474"/>
        <note>substrate</note>
    </ligand>
</feature>
<feature type="binding site" evidence="1">
    <location>
        <begin position="124"/>
        <end position="126"/>
    </location>
    <ligand>
        <name>phosphate</name>
        <dbReference type="ChEBI" id="CHEBI:43474"/>
        <note>substrate</note>
    </ligand>
</feature>
<keyword id="KW-0548">Nucleotidyltransferase</keyword>
<keyword id="KW-1185">Reference proteome</keyword>
<keyword id="KW-0694">RNA-binding</keyword>
<keyword id="KW-0698">rRNA processing</keyword>
<keyword id="KW-0808">Transferase</keyword>
<keyword id="KW-0819">tRNA processing</keyword>
<keyword id="KW-0820">tRNA-binding</keyword>